<dbReference type="EMBL" id="M81440">
    <property type="protein sequence ID" value="AAA30512.1"/>
    <property type="molecule type" value="mRNA"/>
</dbReference>
<dbReference type="EMBL" id="M81441">
    <property type="protein sequence ID" value="AAA30513.1"/>
    <property type="molecule type" value="mRNA"/>
</dbReference>
<dbReference type="PIR" id="A42580">
    <property type="entry name" value="KFBO5"/>
</dbReference>
<dbReference type="RefSeq" id="NP_776304.1">
    <property type="nucleotide sequence ID" value="NM_173879.2"/>
</dbReference>
<dbReference type="PDB" id="1SDD">
    <property type="method" value="X-ray"/>
    <property type="resolution" value="2.80 A"/>
    <property type="chains" value="A=29-334, B=1565-2211"/>
</dbReference>
<dbReference type="PDBsum" id="1SDD"/>
<dbReference type="SMR" id="Q28107"/>
<dbReference type="CORUM" id="Q28107"/>
<dbReference type="FunCoup" id="Q28107">
    <property type="interactions" value="138"/>
</dbReference>
<dbReference type="STRING" id="9913.ENSBTAP00000023573"/>
<dbReference type="GlyCosmos" id="Q28107">
    <property type="glycosylation" value="27 sites, No reported glycans"/>
</dbReference>
<dbReference type="GlyGen" id="Q28107">
    <property type="glycosylation" value="30 sites, 1 O-linked glycan (3 sites)"/>
</dbReference>
<dbReference type="iPTMnet" id="Q28107"/>
<dbReference type="PaxDb" id="9913-ENSBTAP00000023573"/>
<dbReference type="KEGG" id="bta:280687"/>
<dbReference type="CTD" id="2153"/>
<dbReference type="eggNOG" id="ENOG502QSUG">
    <property type="taxonomic scope" value="Eukaryota"/>
</dbReference>
<dbReference type="InParanoid" id="Q28107"/>
<dbReference type="OrthoDB" id="2121828at2759"/>
<dbReference type="EvolutionaryTrace" id="Q28107"/>
<dbReference type="Proteomes" id="UP000009136">
    <property type="component" value="Unplaced"/>
</dbReference>
<dbReference type="GO" id="GO:0005576">
    <property type="term" value="C:extracellular region"/>
    <property type="evidence" value="ECO:0007669"/>
    <property type="project" value="UniProtKB-SubCell"/>
</dbReference>
<dbReference type="GO" id="GO:0031091">
    <property type="term" value="C:platelet alpha granule"/>
    <property type="evidence" value="ECO:0000318"/>
    <property type="project" value="GO_Central"/>
</dbReference>
<dbReference type="GO" id="GO:0005507">
    <property type="term" value="F:copper ion binding"/>
    <property type="evidence" value="ECO:0007669"/>
    <property type="project" value="InterPro"/>
</dbReference>
<dbReference type="GO" id="GO:0008015">
    <property type="term" value="P:blood circulation"/>
    <property type="evidence" value="ECO:0000318"/>
    <property type="project" value="GO_Central"/>
</dbReference>
<dbReference type="GO" id="GO:0007596">
    <property type="term" value="P:blood coagulation"/>
    <property type="evidence" value="ECO:0000318"/>
    <property type="project" value="GO_Central"/>
</dbReference>
<dbReference type="CDD" id="cd04226">
    <property type="entry name" value="CuRO_1_FV_like"/>
    <property type="match status" value="1"/>
</dbReference>
<dbReference type="CDD" id="cd14453">
    <property type="entry name" value="CuRO_2_FV_like"/>
    <property type="match status" value="1"/>
</dbReference>
<dbReference type="CDD" id="cd14454">
    <property type="entry name" value="CuRO_4_FV_like"/>
    <property type="match status" value="1"/>
</dbReference>
<dbReference type="CDD" id="cd14451">
    <property type="entry name" value="CuRO_5_FV_like"/>
    <property type="match status" value="1"/>
</dbReference>
<dbReference type="CDD" id="cd14455">
    <property type="entry name" value="CuRO_6_FV_like"/>
    <property type="match status" value="1"/>
</dbReference>
<dbReference type="CDD" id="cd00057">
    <property type="entry name" value="FA58C"/>
    <property type="match status" value="2"/>
</dbReference>
<dbReference type="FunFam" id="2.60.40.420:FF:000056">
    <property type="entry name" value="Coagulation factor V"/>
    <property type="match status" value="1"/>
</dbReference>
<dbReference type="FunFam" id="2.60.40.420:FF:000050">
    <property type="entry name" value="coagulation factor V isoform X1"/>
    <property type="match status" value="1"/>
</dbReference>
<dbReference type="FunFam" id="2.60.40.420:FF:000068">
    <property type="entry name" value="coagulation factor V isoform X1"/>
    <property type="match status" value="1"/>
</dbReference>
<dbReference type="FunFam" id="2.60.120.260:FF:000002">
    <property type="entry name" value="Coagulation factor VIII"/>
    <property type="match status" value="2"/>
</dbReference>
<dbReference type="FunFam" id="2.60.40.420:FF:000011">
    <property type="entry name" value="Coagulation factor VIII (Predicted)"/>
    <property type="match status" value="2"/>
</dbReference>
<dbReference type="Gene3D" id="2.60.40.420">
    <property type="entry name" value="Cupredoxins - blue copper proteins"/>
    <property type="match status" value="5"/>
</dbReference>
<dbReference type="Gene3D" id="2.60.120.260">
    <property type="entry name" value="Galactose-binding domain-like"/>
    <property type="match status" value="2"/>
</dbReference>
<dbReference type="InterPro" id="IPR009271">
    <property type="entry name" value="Coagulation_factor_V_LSPD"/>
</dbReference>
<dbReference type="InterPro" id="IPR011707">
    <property type="entry name" value="Cu-oxidase-like_N"/>
</dbReference>
<dbReference type="InterPro" id="IPR033138">
    <property type="entry name" value="Cu_oxidase_CS"/>
</dbReference>
<dbReference type="InterPro" id="IPR008972">
    <property type="entry name" value="Cupredoxin"/>
</dbReference>
<dbReference type="InterPro" id="IPR000421">
    <property type="entry name" value="FA58C"/>
</dbReference>
<dbReference type="InterPro" id="IPR024715">
    <property type="entry name" value="Factor_5/8-like"/>
</dbReference>
<dbReference type="InterPro" id="IPR008979">
    <property type="entry name" value="Galactose-bd-like_sf"/>
</dbReference>
<dbReference type="InterPro" id="IPR050633">
    <property type="entry name" value="Neuropilin_MCO_CoagFactor"/>
</dbReference>
<dbReference type="PANTHER" id="PTHR46806:SF10">
    <property type="entry name" value="COAGULATION FACTOR V"/>
    <property type="match status" value="1"/>
</dbReference>
<dbReference type="PANTHER" id="PTHR46806">
    <property type="entry name" value="F5/8 TYPE C DOMAIN-CONTAINING PROTEIN"/>
    <property type="match status" value="1"/>
</dbReference>
<dbReference type="Pfam" id="PF07732">
    <property type="entry name" value="Cu-oxidase_3"/>
    <property type="match status" value="2"/>
</dbReference>
<dbReference type="Pfam" id="PF00754">
    <property type="entry name" value="F5_F8_type_C"/>
    <property type="match status" value="2"/>
</dbReference>
<dbReference type="Pfam" id="PF06049">
    <property type="entry name" value="LSPR"/>
    <property type="match status" value="27"/>
</dbReference>
<dbReference type="PIRSF" id="PIRSF000354">
    <property type="entry name" value="Factors_V_VIII"/>
    <property type="match status" value="1"/>
</dbReference>
<dbReference type="SMART" id="SM00231">
    <property type="entry name" value="FA58C"/>
    <property type="match status" value="2"/>
</dbReference>
<dbReference type="SUPFAM" id="SSF49503">
    <property type="entry name" value="Cupredoxins"/>
    <property type="match status" value="6"/>
</dbReference>
<dbReference type="SUPFAM" id="SSF49785">
    <property type="entry name" value="Galactose-binding domain-like"/>
    <property type="match status" value="2"/>
</dbReference>
<dbReference type="PROSITE" id="PS01285">
    <property type="entry name" value="FA58C_1"/>
    <property type="match status" value="2"/>
</dbReference>
<dbReference type="PROSITE" id="PS01286">
    <property type="entry name" value="FA58C_2"/>
    <property type="match status" value="2"/>
</dbReference>
<dbReference type="PROSITE" id="PS50022">
    <property type="entry name" value="FA58C_3"/>
    <property type="match status" value="2"/>
</dbReference>
<dbReference type="PROSITE" id="PS00079">
    <property type="entry name" value="MULTICOPPER_OXIDASE1"/>
    <property type="match status" value="2"/>
</dbReference>
<name>FA5_BOVIN</name>
<protein>
    <recommendedName>
        <fullName>Coagulation factor V</fullName>
    </recommendedName>
    <alternativeName>
        <fullName>Activated protein C cofactor</fullName>
    </alternativeName>
    <component>
        <recommendedName>
            <fullName>Coagulation factor V heavy chain</fullName>
        </recommendedName>
    </component>
    <component>
        <recommendedName>
            <fullName>Coagulation factor V light chain</fullName>
        </recommendedName>
    </component>
</protein>
<organism>
    <name type="scientific">Bos taurus</name>
    <name type="common">Bovine</name>
    <dbReference type="NCBI Taxonomy" id="9913"/>
    <lineage>
        <taxon>Eukaryota</taxon>
        <taxon>Metazoa</taxon>
        <taxon>Chordata</taxon>
        <taxon>Craniata</taxon>
        <taxon>Vertebrata</taxon>
        <taxon>Euteleostomi</taxon>
        <taxon>Mammalia</taxon>
        <taxon>Eutheria</taxon>
        <taxon>Laurasiatheria</taxon>
        <taxon>Artiodactyla</taxon>
        <taxon>Ruminantia</taxon>
        <taxon>Pecora</taxon>
        <taxon>Bovidae</taxon>
        <taxon>Bovinae</taxon>
        <taxon>Bos</taxon>
    </lineage>
</organism>
<feature type="signal peptide" evidence="3">
    <location>
        <begin position="1"/>
        <end position="28"/>
    </location>
</feature>
<feature type="chain" id="PRO_0000002974" description="Coagulation factor V">
    <location>
        <begin position="29"/>
        <end position="2211"/>
    </location>
</feature>
<feature type="chain" id="PRO_0000002975" description="Coagulation factor V heavy chain" evidence="1">
    <location>
        <begin position="29"/>
        <end position="741"/>
    </location>
</feature>
<feature type="propeptide" id="PRO_0000002976" description="Activation peptide (connecting region)" evidence="1">
    <location>
        <begin position="742"/>
        <end position="1564"/>
    </location>
</feature>
<feature type="chain" id="PRO_0000002977" description="Coagulation factor V light chain" evidence="1">
    <location>
        <begin position="1565"/>
        <end position="2211"/>
    </location>
</feature>
<feature type="domain" description="F5/8 type A 1">
    <location>
        <begin position="30"/>
        <end position="327"/>
    </location>
</feature>
<feature type="domain" description="Plastocyanin-like 1">
    <location>
        <begin position="30"/>
        <end position="193"/>
    </location>
</feature>
<feature type="domain" description="Plastocyanin-like 2">
    <location>
        <begin position="203"/>
        <end position="327"/>
    </location>
</feature>
<feature type="domain" description="F5/8 type A 2">
    <location>
        <begin position="348"/>
        <end position="686"/>
    </location>
</feature>
<feature type="domain" description="Plastocyanin-like 3">
    <location>
        <begin position="348"/>
        <end position="525"/>
    </location>
</feature>
<feature type="domain" description="Plastocyanin-like 4">
    <location>
        <begin position="535"/>
        <end position="686"/>
    </location>
</feature>
<feature type="repeat" description="1-1">
    <location>
        <begin position="1124"/>
        <end position="1137"/>
    </location>
</feature>
<feature type="repeat" description="1-2">
    <location>
        <begin position="1138"/>
        <end position="1151"/>
    </location>
</feature>
<feature type="repeat" description="2-1">
    <location>
        <begin position="1188"/>
        <end position="1196"/>
    </location>
</feature>
<feature type="repeat" description="2-2">
    <location>
        <begin position="1197"/>
        <end position="1205"/>
    </location>
</feature>
<feature type="repeat" description="2-3">
    <location>
        <begin position="1206"/>
        <end position="1214"/>
    </location>
</feature>
<feature type="repeat" description="2-4">
    <location>
        <begin position="1215"/>
        <end position="1223"/>
    </location>
</feature>
<feature type="repeat" description="2-5">
    <location>
        <begin position="1224"/>
        <end position="1232"/>
    </location>
</feature>
<feature type="repeat" description="2-6">
    <location>
        <begin position="1233"/>
        <end position="1241"/>
    </location>
</feature>
<feature type="repeat" description="2-7">
    <location>
        <begin position="1242"/>
        <end position="1250"/>
    </location>
</feature>
<feature type="repeat" description="2-8">
    <location>
        <begin position="1251"/>
        <end position="1259"/>
    </location>
</feature>
<feature type="repeat" description="2-9">
    <location>
        <begin position="1260"/>
        <end position="1268"/>
    </location>
</feature>
<feature type="repeat" description="2-10">
    <location>
        <begin position="1269"/>
        <end position="1277"/>
    </location>
</feature>
<feature type="repeat" description="2-11">
    <location>
        <begin position="1278"/>
        <end position="1286"/>
    </location>
</feature>
<feature type="repeat" description="2-12">
    <location>
        <begin position="1287"/>
        <end position="1295"/>
    </location>
</feature>
<feature type="repeat" description="2-13">
    <location>
        <begin position="1296"/>
        <end position="1304"/>
    </location>
</feature>
<feature type="repeat" description="2-14">
    <location>
        <begin position="1305"/>
        <end position="1313"/>
    </location>
</feature>
<feature type="repeat" description="2-15">
    <location>
        <begin position="1314"/>
        <end position="1322"/>
    </location>
</feature>
<feature type="repeat" description="2-16">
    <location>
        <begin position="1323"/>
        <end position="1331"/>
    </location>
</feature>
<feature type="repeat" description="2-17">
    <location>
        <begin position="1332"/>
        <end position="1340"/>
    </location>
</feature>
<feature type="repeat" description="2-18">
    <location>
        <begin position="1341"/>
        <end position="1349"/>
    </location>
</feature>
<feature type="repeat" description="2-19">
    <location>
        <begin position="1350"/>
        <end position="1358"/>
    </location>
</feature>
<feature type="repeat" description="2-20">
    <location>
        <begin position="1359"/>
        <end position="1367"/>
    </location>
</feature>
<feature type="repeat" description="2-21">
    <location>
        <begin position="1368"/>
        <end position="1376"/>
    </location>
</feature>
<feature type="repeat" description="2-22">
    <location>
        <begin position="1377"/>
        <end position="1385"/>
    </location>
</feature>
<feature type="repeat" description="2-23">
    <location>
        <begin position="1386"/>
        <end position="1394"/>
    </location>
</feature>
<feature type="repeat" description="2-24">
    <location>
        <begin position="1395"/>
        <end position="1403"/>
    </location>
</feature>
<feature type="repeat" description="2-25">
    <location>
        <begin position="1404"/>
        <end position="1412"/>
    </location>
</feature>
<feature type="repeat" description="2-26">
    <location>
        <begin position="1413"/>
        <end position="1421"/>
    </location>
</feature>
<feature type="repeat" description="2-27">
    <location>
        <begin position="1422"/>
        <end position="1430"/>
    </location>
</feature>
<feature type="repeat" description="2-28">
    <location>
        <begin position="1431"/>
        <end position="1439"/>
    </location>
</feature>
<feature type="repeat" description="2-29; truncated">
    <location>
        <begin position="1440"/>
        <end position="1444"/>
    </location>
</feature>
<feature type="repeat" description="2-30">
    <location>
        <begin position="1445"/>
        <end position="1453"/>
    </location>
</feature>
<feature type="domain" description="F5/8 type A 3">
    <location>
        <begin position="1569"/>
        <end position="1890"/>
    </location>
</feature>
<feature type="domain" description="Plastocyanin-like 5">
    <location>
        <begin position="1569"/>
        <end position="1738"/>
    </location>
</feature>
<feature type="domain" description="Plastocyanin-like 6">
    <location>
        <begin position="1748"/>
        <end position="1890"/>
    </location>
</feature>
<feature type="domain" description="F5/8 type C 1" evidence="4">
    <location>
        <begin position="1894"/>
        <end position="2048"/>
    </location>
</feature>
<feature type="domain" description="F5/8 type C 2" evidence="4">
    <location>
        <begin position="2053"/>
        <end position="2208"/>
    </location>
</feature>
<feature type="region of interest" description="B">
    <location>
        <begin position="696"/>
        <end position="1564"/>
    </location>
</feature>
<feature type="region of interest" description="Disordered" evidence="5">
    <location>
        <begin position="814"/>
        <end position="844"/>
    </location>
</feature>
<feature type="region of interest" description="Disordered" evidence="5">
    <location>
        <begin position="954"/>
        <end position="1039"/>
    </location>
</feature>
<feature type="region of interest" description="Disordered" evidence="5">
    <location>
        <begin position="1084"/>
        <end position="1162"/>
    </location>
</feature>
<feature type="region of interest" description="2 X 14 AA tandem repeats">
    <location>
        <begin position="1124"/>
        <end position="1151"/>
    </location>
</feature>
<feature type="region of interest" description="30 X 9 AA approximate tandem repeats of [AS]-L-S-P-D-[LP]-[GS]-Q-[TE]">
    <location>
        <begin position="1188"/>
        <end position="1453"/>
    </location>
</feature>
<feature type="region of interest" description="Disordered" evidence="5">
    <location>
        <begin position="1195"/>
        <end position="1471"/>
    </location>
</feature>
<feature type="compositionally biased region" description="Polar residues" evidence="5">
    <location>
        <begin position="954"/>
        <end position="969"/>
    </location>
</feature>
<feature type="compositionally biased region" description="Basic and acidic residues" evidence="5">
    <location>
        <begin position="995"/>
        <end position="1009"/>
    </location>
</feature>
<feature type="compositionally biased region" description="Polar residues" evidence="5">
    <location>
        <begin position="1091"/>
        <end position="1103"/>
    </location>
</feature>
<feature type="compositionally biased region" description="Polar residues" evidence="5">
    <location>
        <begin position="1127"/>
        <end position="1160"/>
    </location>
</feature>
<feature type="compositionally biased region" description="Polar residues" evidence="5">
    <location>
        <begin position="1214"/>
        <end position="1234"/>
    </location>
</feature>
<feature type="compositionally biased region" description="Polar residues" evidence="5">
    <location>
        <begin position="1241"/>
        <end position="1252"/>
    </location>
</feature>
<feature type="compositionally biased region" description="Polar residues" evidence="5">
    <location>
        <begin position="1259"/>
        <end position="1270"/>
    </location>
</feature>
<feature type="compositionally biased region" description="Polar residues" evidence="5">
    <location>
        <begin position="1286"/>
        <end position="1306"/>
    </location>
</feature>
<feature type="compositionally biased region" description="Polar residues" evidence="5">
    <location>
        <begin position="1313"/>
        <end position="1324"/>
    </location>
</feature>
<feature type="compositionally biased region" description="Polar residues" evidence="5">
    <location>
        <begin position="1331"/>
        <end position="1352"/>
    </location>
</feature>
<feature type="compositionally biased region" description="Polar residues" evidence="5">
    <location>
        <begin position="1367"/>
        <end position="1388"/>
    </location>
</feature>
<feature type="compositionally biased region" description="Polar residues" evidence="5">
    <location>
        <begin position="1403"/>
        <end position="1414"/>
    </location>
</feature>
<feature type="compositionally biased region" description="Low complexity" evidence="5">
    <location>
        <begin position="1422"/>
        <end position="1441"/>
    </location>
</feature>
<feature type="compositionally biased region" description="Polar residues" evidence="5">
    <location>
        <begin position="1442"/>
        <end position="1463"/>
    </location>
</feature>
<feature type="binding site">
    <location>
        <position position="139"/>
    </location>
    <ligand>
        <name>Ca(2+)</name>
        <dbReference type="ChEBI" id="CHEBI:29108"/>
    </ligand>
</feature>
<feature type="binding site">
    <location>
        <position position="140"/>
    </location>
    <ligand>
        <name>Ca(2+)</name>
        <dbReference type="ChEBI" id="CHEBI:29108"/>
    </ligand>
</feature>
<feature type="binding site">
    <location>
        <position position="1830"/>
    </location>
    <ligand>
        <name>Cu cation</name>
        <dbReference type="ChEBI" id="CHEBI:23378"/>
    </ligand>
</feature>
<feature type="binding site">
    <location>
        <position position="1832"/>
    </location>
    <ligand>
        <name>Cu cation</name>
        <dbReference type="ChEBI" id="CHEBI:23378"/>
    </ligand>
</feature>
<feature type="binding site">
    <location>
        <position position="1872"/>
    </location>
    <ligand>
        <name>Cu cation</name>
        <dbReference type="ChEBI" id="CHEBI:23378"/>
    </ligand>
</feature>
<feature type="site" description="Cleavage; by activated protein C" evidence="1">
    <location>
        <begin position="334"/>
        <end position="335"/>
    </location>
</feature>
<feature type="site" description="Cleavage; by activated protein C" evidence="1">
    <location>
        <begin position="533"/>
        <end position="534"/>
    </location>
</feature>
<feature type="site" description="Cleavage; by thrombin" evidence="1">
    <location>
        <begin position="741"/>
        <end position="742"/>
    </location>
</feature>
<feature type="site" description="Cleavage; by thrombin" evidence="1">
    <location>
        <begin position="1034"/>
        <end position="1035"/>
    </location>
</feature>
<feature type="site" description="Cleavage; by thrombin">
    <location>
        <begin position="1564"/>
        <end position="1565"/>
    </location>
</feature>
<feature type="modified residue" description="Phosphothreonine" evidence="2">
    <location>
        <position position="644"/>
    </location>
</feature>
<feature type="modified residue" description="Sulfotyrosine" evidence="3">
    <location>
        <position position="697"/>
    </location>
</feature>
<feature type="modified residue" description="Sulfotyrosine" evidence="3">
    <location>
        <position position="701"/>
    </location>
</feature>
<feature type="modified residue" description="Sulfotyrosine" evidence="3">
    <location>
        <position position="730"/>
    </location>
</feature>
<feature type="modified residue" description="Sulfotyrosine" evidence="3">
    <location>
        <position position="1513"/>
    </location>
</feature>
<feature type="modified residue" description="Sulfotyrosine" evidence="3">
    <location>
        <position position="1529"/>
    </location>
</feature>
<feature type="modified residue" description="Sulfotyrosine" evidence="3">
    <location>
        <position position="1537"/>
    </location>
</feature>
<feature type="modified residue" description="Sulfotyrosine" evidence="3">
    <location>
        <position position="1541"/>
    </location>
</feature>
<feature type="glycosylation site" description="N-linked (GlcNAc...) asparagine" evidence="6">
    <location>
        <position position="225"/>
    </location>
</feature>
<feature type="glycosylation site" description="N-linked (GlcNAc...) asparagine" evidence="6">
    <location>
        <position position="239"/>
    </location>
</feature>
<feature type="glycosylation site" description="N-linked (GlcNAc...) asparagine" evidence="3">
    <location>
        <position position="297"/>
    </location>
</feature>
<feature type="glycosylation site" description="N-linked (GlcNAc...) asparagine" evidence="3">
    <location>
        <position position="382"/>
    </location>
</feature>
<feature type="glycosylation site" description="N-linked (GlcNAc...) asparagine" evidence="3">
    <location>
        <position position="460"/>
    </location>
</feature>
<feature type="glycosylation site" description="N-linked (GlcNAc...) asparagine" evidence="3">
    <location>
        <position position="553"/>
    </location>
</feature>
<feature type="glycosylation site" description="N-linked (GlcNAc...) asparagine" evidence="3">
    <location>
        <position position="587"/>
    </location>
</feature>
<feature type="glycosylation site" description="N-linked (GlcNAc...) asparagine" evidence="3">
    <location>
        <position position="745"/>
    </location>
</feature>
<feature type="glycosylation site" description="N-linked (GlcNAc...) asparagine" evidence="3">
    <location>
        <position position="756"/>
    </location>
</feature>
<feature type="glycosylation site" description="N-linked (GlcNAc...) asparagine" evidence="3">
    <location>
        <position position="774"/>
    </location>
</feature>
<feature type="glycosylation site" description="N-linked (GlcNAc...) asparagine" evidence="3">
    <location>
        <position position="780"/>
    </location>
</feature>
<feature type="glycosylation site" description="N-linked (GlcNAc...) asparagine" evidence="3">
    <location>
        <position position="902"/>
    </location>
</feature>
<feature type="glycosylation site" description="N-linked (GlcNAc...) asparagine" evidence="3">
    <location>
        <position position="952"/>
    </location>
</feature>
<feature type="glycosylation site" description="N-linked (GlcNAc...) asparagine" evidence="3">
    <location>
        <position position="964"/>
    </location>
</feature>
<feature type="glycosylation site" description="N-linked (GlcNAc...) asparagine" evidence="3">
    <location>
        <position position="1044"/>
    </location>
</feature>
<feature type="glycosylation site" description="N-linked (GlcNAc...) asparagine" evidence="3">
    <location>
        <position position="1053"/>
    </location>
</feature>
<feature type="glycosylation site" description="N-linked (GlcNAc...) asparagine" evidence="3">
    <location>
        <position position="1062"/>
    </location>
</feature>
<feature type="glycosylation site" description="N-linked (GlcNAc...) asparagine" evidence="3">
    <location>
        <position position="1071"/>
    </location>
</feature>
<feature type="glycosylation site" description="N-linked (GlcNAc...) asparagine" evidence="3">
    <location>
        <position position="1078"/>
    </location>
</feature>
<feature type="glycosylation site" description="N-linked (GlcNAc...) asparagine" evidence="3">
    <location>
        <position position="1094"/>
    </location>
</feature>
<feature type="glycosylation site" description="N-linked (GlcNAc...) asparagine" evidence="3">
    <location>
        <position position="1451"/>
    </location>
</feature>
<feature type="glycosylation site" description="N-linked (GlcNAc...) asparagine" evidence="3">
    <location>
        <position position="1490"/>
    </location>
</feature>
<feature type="glycosylation site" description="N-linked (GlcNAc...) asparagine" evidence="3">
    <location>
        <position position="1550"/>
    </location>
</feature>
<feature type="glycosylation site" description="N-linked (GlcNAc...) asparagine" evidence="3">
    <location>
        <position position="1690"/>
    </location>
</feature>
<feature type="glycosylation site" description="N-linked (GlcNAc...) asparagine" evidence="3">
    <location>
        <position position="1839"/>
    </location>
</feature>
<feature type="glycosylation site" description="N-linked (GlcNAc...) asparagine" evidence="3">
    <location>
        <position position="1997"/>
    </location>
</feature>
<feature type="glycosylation site" description="N-linked (GlcNAc...) asparagine" evidence="3">
    <location>
        <position position="2196"/>
    </location>
</feature>
<feature type="disulfide bond">
    <location>
        <begin position="167"/>
        <end position="193"/>
    </location>
</feature>
<feature type="disulfide bond">
    <location>
        <begin position="248"/>
        <end position="329"/>
    </location>
</feature>
<feature type="disulfide bond">
    <location>
        <begin position="499"/>
        <end position="525"/>
    </location>
</feature>
<feature type="disulfide bond">
    <location>
        <begin position="607"/>
        <end position="688"/>
    </location>
</feature>
<feature type="disulfide bond" evidence="7">
    <location>
        <begin position="1712"/>
        <end position="1738"/>
    </location>
</feature>
<feature type="disulfide bond">
    <location>
        <begin position="1894"/>
        <end position="2048"/>
    </location>
</feature>
<feature type="disulfide bond">
    <location>
        <begin position="2053"/>
        <end position="2208"/>
    </location>
</feature>
<feature type="sequence variant" description="In variant 2.">
    <original>NFTLPA</original>
    <variation>T</variation>
    <location>
        <begin position="587"/>
        <end position="592"/>
    </location>
</feature>
<feature type="strand" evidence="8">
    <location>
        <begin position="37"/>
        <end position="43"/>
    </location>
</feature>
<feature type="strand" evidence="8">
    <location>
        <begin position="61"/>
        <end position="67"/>
    </location>
</feature>
<feature type="turn" evidence="8">
    <location>
        <begin position="71"/>
        <end position="73"/>
    </location>
</feature>
<feature type="strand" evidence="8">
    <location>
        <begin position="90"/>
        <end position="93"/>
    </location>
</feature>
<feature type="strand" evidence="8">
    <location>
        <begin position="97"/>
        <end position="104"/>
    </location>
</feature>
<feature type="strand" evidence="8">
    <location>
        <begin position="106"/>
        <end position="108"/>
    </location>
</feature>
<feature type="strand" evidence="8">
    <location>
        <begin position="113"/>
        <end position="117"/>
    </location>
</feature>
<feature type="turn" evidence="8">
    <location>
        <begin position="121"/>
        <end position="123"/>
    </location>
</feature>
<feature type="helix" evidence="8">
    <location>
        <begin position="134"/>
        <end position="137"/>
    </location>
</feature>
<feature type="strand" evidence="8">
    <location>
        <begin position="147"/>
        <end position="153"/>
    </location>
</feature>
<feature type="helix" evidence="8">
    <location>
        <begin position="156"/>
        <end position="158"/>
    </location>
</feature>
<feature type="strand" evidence="8">
    <location>
        <begin position="162"/>
        <end position="164"/>
    </location>
</feature>
<feature type="strand" evidence="8">
    <location>
        <begin position="166"/>
        <end position="173"/>
    </location>
</feature>
<feature type="strand" evidence="8">
    <location>
        <begin position="176"/>
        <end position="178"/>
    </location>
</feature>
<feature type="helix" evidence="8">
    <location>
        <begin position="179"/>
        <end position="183"/>
    </location>
</feature>
<feature type="strand" evidence="8">
    <location>
        <begin position="188"/>
        <end position="193"/>
    </location>
</feature>
<feature type="strand" evidence="8">
    <location>
        <begin position="202"/>
        <end position="207"/>
    </location>
</feature>
<feature type="strand" evidence="8">
    <location>
        <begin position="217"/>
        <end position="219"/>
    </location>
</feature>
<feature type="strand" evidence="8">
    <location>
        <begin position="222"/>
        <end position="225"/>
    </location>
</feature>
<feature type="strand" evidence="8">
    <location>
        <begin position="230"/>
        <end position="232"/>
    </location>
</feature>
<feature type="strand" evidence="8">
    <location>
        <begin position="234"/>
        <end position="236"/>
    </location>
</feature>
<feature type="strand" evidence="8">
    <location>
        <begin position="262"/>
        <end position="264"/>
    </location>
</feature>
<feature type="turn" evidence="8">
    <location>
        <begin position="313"/>
        <end position="315"/>
    </location>
</feature>
<feature type="helix" evidence="8">
    <location>
        <begin position="316"/>
        <end position="318"/>
    </location>
</feature>
<feature type="strand" evidence="8">
    <location>
        <begin position="1570"/>
        <end position="1583"/>
    </location>
</feature>
<feature type="turn" evidence="8">
    <location>
        <begin position="1584"/>
        <end position="1587"/>
    </location>
</feature>
<feature type="strand" evidence="8">
    <location>
        <begin position="1601"/>
        <end position="1612"/>
    </location>
</feature>
<feature type="helix" evidence="8">
    <location>
        <begin position="1626"/>
        <end position="1628"/>
    </location>
</feature>
<feature type="strand" evidence="8">
    <location>
        <begin position="1635"/>
        <end position="1638"/>
    </location>
</feature>
<feature type="strand" evidence="8">
    <location>
        <begin position="1642"/>
        <end position="1647"/>
    </location>
</feature>
<feature type="strand" evidence="8">
    <location>
        <begin position="1651"/>
        <end position="1653"/>
    </location>
</feature>
<feature type="strand" evidence="8">
    <location>
        <begin position="1658"/>
        <end position="1660"/>
    </location>
</feature>
<feature type="turn" evidence="8">
    <location>
        <begin position="1701"/>
        <end position="1703"/>
    </location>
</feature>
<feature type="strand" evidence="8">
    <location>
        <begin position="1707"/>
        <end position="1709"/>
    </location>
</feature>
<feature type="strand" evidence="8">
    <location>
        <begin position="1711"/>
        <end position="1718"/>
    </location>
</feature>
<feature type="helix" evidence="8">
    <location>
        <begin position="1723"/>
        <end position="1727"/>
    </location>
</feature>
<feature type="turn" evidence="8">
    <location>
        <begin position="1728"/>
        <end position="1730"/>
    </location>
</feature>
<feature type="strand" evidence="8">
    <location>
        <begin position="1732"/>
        <end position="1738"/>
    </location>
</feature>
<feature type="strand" evidence="8">
    <location>
        <begin position="1755"/>
        <end position="1764"/>
    </location>
</feature>
<feature type="helix" evidence="8">
    <location>
        <begin position="1765"/>
        <end position="1767"/>
    </location>
</feature>
<feature type="strand" evidence="8">
    <location>
        <begin position="1791"/>
        <end position="1795"/>
    </location>
</feature>
<feature type="strand" evidence="8">
    <location>
        <begin position="1798"/>
        <end position="1800"/>
    </location>
</feature>
<feature type="strand" evidence="8">
    <location>
        <begin position="1806"/>
        <end position="1808"/>
    </location>
</feature>
<feature type="strand" evidence="8">
    <location>
        <begin position="1812"/>
        <end position="1819"/>
    </location>
</feature>
<feature type="strand" evidence="8">
    <location>
        <begin position="1827"/>
        <end position="1831"/>
    </location>
</feature>
<feature type="strand" evidence="8">
    <location>
        <begin position="1836"/>
        <end position="1838"/>
    </location>
</feature>
<feature type="strand" evidence="8">
    <location>
        <begin position="1840"/>
        <end position="1842"/>
    </location>
</feature>
<feature type="strand" evidence="8">
    <location>
        <begin position="1844"/>
        <end position="1851"/>
    </location>
</feature>
<feature type="strand" evidence="8">
    <location>
        <begin position="1855"/>
        <end position="1862"/>
    </location>
</feature>
<feature type="strand" evidence="8">
    <location>
        <begin position="1865"/>
        <end position="1872"/>
    </location>
</feature>
<feature type="helix" evidence="8">
    <location>
        <begin position="1876"/>
        <end position="1879"/>
    </location>
</feature>
<feature type="turn" evidence="8">
    <location>
        <begin position="1880"/>
        <end position="1882"/>
    </location>
</feature>
<feature type="strand" evidence="8">
    <location>
        <begin position="1884"/>
        <end position="1890"/>
    </location>
</feature>
<feature type="turn" evidence="8">
    <location>
        <begin position="1900"/>
        <end position="1902"/>
    </location>
</feature>
<feature type="helix" evidence="8">
    <location>
        <begin position="1907"/>
        <end position="1909"/>
    </location>
</feature>
<feature type="strand" evidence="8">
    <location>
        <begin position="1910"/>
        <end position="1913"/>
    </location>
</feature>
<feature type="helix" evidence="8">
    <location>
        <begin position="1921"/>
        <end position="1923"/>
    </location>
</feature>
<feature type="strand" evidence="8">
    <location>
        <begin position="1930"/>
        <end position="1932"/>
    </location>
</feature>
<feature type="strand" evidence="8">
    <location>
        <begin position="1934"/>
        <end position="1936"/>
    </location>
</feature>
<feature type="strand" evidence="8">
    <location>
        <begin position="1950"/>
        <end position="1966"/>
    </location>
</feature>
<feature type="strand" evidence="8">
    <location>
        <begin position="1968"/>
        <end position="1990"/>
    </location>
</feature>
<feature type="strand" evidence="8">
    <location>
        <begin position="1999"/>
        <end position="2002"/>
    </location>
</feature>
<feature type="strand" evidence="8">
    <location>
        <begin position="2009"/>
        <end position="2013"/>
    </location>
</feature>
<feature type="strand" evidence="8">
    <location>
        <begin position="2015"/>
        <end position="2038"/>
    </location>
</feature>
<feature type="strand" evidence="8">
    <location>
        <begin position="2040"/>
        <end position="2048"/>
    </location>
</feature>
<feature type="turn" evidence="8">
    <location>
        <begin position="2059"/>
        <end position="2061"/>
    </location>
</feature>
<feature type="strand" evidence="8">
    <location>
        <begin position="2062"/>
        <end position="2064"/>
    </location>
</feature>
<feature type="strand" evidence="8">
    <location>
        <begin position="2069"/>
        <end position="2072"/>
    </location>
</feature>
<feature type="turn" evidence="8">
    <location>
        <begin position="2078"/>
        <end position="2080"/>
    </location>
</feature>
<feature type="helix" evidence="8">
    <location>
        <begin position="2085"/>
        <end position="2087"/>
    </location>
</feature>
<feature type="strand" evidence="8">
    <location>
        <begin position="2089"/>
        <end position="2091"/>
    </location>
</feature>
<feature type="strand" evidence="8">
    <location>
        <begin position="2094"/>
        <end position="2096"/>
    </location>
</feature>
<feature type="strand" evidence="8">
    <location>
        <begin position="2098"/>
        <end position="2100"/>
    </location>
</feature>
<feature type="strand" evidence="8">
    <location>
        <begin position="2110"/>
        <end position="2126"/>
    </location>
</feature>
<feature type="strand" evidence="8">
    <location>
        <begin position="2128"/>
        <end position="2130"/>
    </location>
</feature>
<feature type="strand" evidence="8">
    <location>
        <begin position="2133"/>
        <end position="2140"/>
    </location>
</feature>
<feature type="strand" evidence="8">
    <location>
        <begin position="2142"/>
        <end position="2149"/>
    </location>
</feature>
<feature type="strand" evidence="8">
    <location>
        <begin position="2169"/>
        <end position="2172"/>
    </location>
</feature>
<feature type="strand" evidence="8">
    <location>
        <begin position="2175"/>
        <end position="2190"/>
    </location>
</feature>
<feature type="strand" evidence="8">
    <location>
        <begin position="2194"/>
        <end position="2198"/>
    </location>
</feature>
<feature type="strand" evidence="8">
    <location>
        <begin position="2200"/>
        <end position="2208"/>
    </location>
</feature>
<sequence>MFLACPGFWVLVVLGSSWAGWGNLGAEAAKLRQFYVAAQSIRWNYRPESTHLSSKPFETSFKKIVYREYEAYFQKEKPQSRTSGLLGPTLYAEVGDIMKVHFKNKAHKPLSIHAQGIKYSKFSEGASYSDHTLPMEKMDDAVAPGQEYTYEWIISEHSGPTHDDPPCLTHIYYSYVNLVEDFNSGLIGPLLICKKGTLTEDGTQKMFEKQHVLMFAVFDESKSWNQTSSLMYTVNGYVNGTMPDITVCAHDHISWHLIGMSSGPELFSIHFNGQVLEQNHHKISAITLVSATSTTANMTVSPEGRWTIASLIPRHFQAGMQAYIDIKNCAKKTRNPKKLTRDQRRHIKRWEYFIAAEEVIWDYAPIIPANMDKKYRSLHLDNFSNRIGKHYKKVVYKQYQDDSFTKRLEDPSSEGDGILGPIIRAQVRDTLKIVFKNMASRSYSIYPHGVTFSPYDNEVNSSSTSGSNTMIRAVRPGETYTYKWNILESDEPTENDAQCLTRPYYSNVDITRDLASGLIGLLLICKSRSLDRRGIQRAADIEQQAVFAVFDENKSWYIEDNIYKFCENPEKVKRDDPKFYESNIMSNFTLPAINGYVPESIPILGFCFDDTVQWHFCSVGTQNDILTIHFTGHSFIYGKRHEDTLTLFPMQGESVTVTMDNVGTWMLTTMNSNPRSKKLRLRFRDAKCIRNDDDDSYEIIYEPSGSTAMTTKKIHDSSEIEDENDADSDYQDELALILGLRSFRNSSLNQEKDELNLTALALEKDSEFIPPSANRSLDSNSSSRSHVSRLIAKNFAESLKTLLHLEAPAAGSPLEHAGLDKNSALNPPMAEHSSPYSEDPREDHPLSDVTGVSLLPFGTGFKNRKPAKHQRFQVGRGQAAKHKFSQTRFPAHKTRTRLSQDNSSSSRMGPWEDIPSDLLLLQQKDPYKILNGEWHLVSEKGSYEIIQDANENKTVNKLPNSPQNDSRTWGENIPFKNSHGKQSGHPTFLVTRRKPLQDRQDRRNSRLKEGLPLIRTRRKKKEEKPAYHVPLSPRSFHPLRGEVNASFSDRRHNHSLLLHASNETSLSIDLNQTFPSMNLSLAASLPDHDQTSPNDTTSQTSSPPDLYPTVSPEEHYQIFPIQDSDPTHSTTAPSNRSPDPTHSTTAPSNRSPPTQPSQIPNYDLRNRAIPTDVSQIFPSLELEVWQTATSLDLSQPSISPDLGQMALSPDPGQESLSPDLGQTSLSPDLSQESLSPDLGQTALSPDPSQESLSPDLGQTALSPDPSQESLSPDLGQTALSPDPGQESLSPDLGQTSLSPDLSQESLSPDLGQTALSPDPSQESLSPDLGQTALSPDPSQESLSPDLGQTSLSPDLGQESLSPDLGQTALSPDPSQESLSPDLGQTSLSPDLGQESLSPDLGQTALSPDLSQESLSPDLGQTPLSPDLSLESLSPDLSQLDLKQTSPPLDLNQTSHTSESSQSLPLPEFGQTFPNADIGQMPSPPPDSTLNNTFIPEEFNPLVVVGLSRDDGDYIEIIPRQKEESSEEDYGEFEFVAYNDPYQTDLRTDINSSRNPDNIAAWYLRSNTGNRKYYYIAAEEISWDYSKFVQSDDVDYVPEDTVYKKVVFRKYLDSTFTKLDPQGEYEEHLGILGPVIRAEVDDVIQVRFKNLASRPYSLHAHGLSYEKSSEGKTYEDDSPEWFKEDNAIQPNKTYTYVWHATTRSGPENPGSACRAWAYYSAVNPEKDIHSGLIGPLLICRKGTLDKETNMPVDMREFVLLFMVFDEKKSWYYDKKPTRSWRRASSEVKNSHEFHAINGMIYNLPGLRMYEQEWVRLHLLNLGGSRDIHVVHFHGQTLLENGTQQHQLGVWPLLPGSFKTLEMKASKPGWWLLDTEVGEIQRAGMQTPFLIVDRECKMPMGLSTGLIADSQIQASEFWGYWEPKLARLNNGGSYNAWIAEKLSTEFNPEPWIQVDMQKEVLLTGIQTQGAKHYLKPYYTTEFCVAYSLDRKNWRIFKGNSTRNVMYFGGNSDASTIKENQIDPPVVARYIRISPTGSYNKPALRLELQGCEVNGCSTPLGMESGKIENKQITASSFKKSWWGNYWEPFLARLNAQGRVNAWQAKANNNNQWLQIDLLKIKKITAIVTQGCKSLSSEMYVKSYTIHYSDQGTDWKPYREKSSMVDKIFEGNNNVRGHVKNFFNPPIISRFIRIIPKTWNQSIALRLELFGCDMY</sequence>
<keyword id="KW-0002">3D-structure</keyword>
<keyword id="KW-0094">Blood coagulation</keyword>
<keyword id="KW-0106">Calcium</keyword>
<keyword id="KW-0186">Copper</keyword>
<keyword id="KW-1015">Disulfide bond</keyword>
<keyword id="KW-0325">Glycoprotein</keyword>
<keyword id="KW-0356">Hemostasis</keyword>
<keyword id="KW-0479">Metal-binding</keyword>
<keyword id="KW-0597">Phosphoprotein</keyword>
<keyword id="KW-1185">Reference proteome</keyword>
<keyword id="KW-0677">Repeat</keyword>
<keyword id="KW-0964">Secreted</keyword>
<keyword id="KW-0732">Signal</keyword>
<keyword id="KW-0765">Sulfation</keyword>
<keyword id="KW-0865">Zymogen</keyword>
<reference key="1">
    <citation type="journal article" date="1992" name="J. Biol. Chem.">
        <title>The complete cDNA sequence of bovine coagulation factor V.</title>
        <authorList>
            <person name="Guinto E.R."/>
            <person name="Esmon C.T."/>
            <person name="Mann K.G."/>
            <person name="Macgillivray R.T."/>
        </authorList>
    </citation>
    <scope>NUCLEOTIDE SEQUENCE [MRNA]</scope>
    <source>
        <tissue>Liver</tissue>
    </source>
</reference>
<reference key="2">
    <citation type="journal article" date="1994" name="Biochemistry">
        <title>Determination of the disulfide bridges in factor Va heavy chain.</title>
        <authorList>
            <person name="Xue J."/>
            <person name="Kalafatis M."/>
            <person name="Silveira J.R."/>
            <person name="Kung C."/>
            <person name="Mann K.G."/>
        </authorList>
    </citation>
    <scope>DISULFIDE BONDS</scope>
</reference>
<reference key="3">
    <citation type="journal article" date="2004" name="Proc. Natl. Acad. Sci. U.S.A.">
        <title>The crystal structure of activated protein C-inactivated bovine factor Va: Implications for cofactor function.</title>
        <authorList>
            <person name="Adams T.E."/>
            <person name="Hockin M.F."/>
            <person name="Mann K.G."/>
            <person name="Everse S.J."/>
        </authorList>
    </citation>
    <scope>X-RAY CRYSTALLOGRAPHY (2.8 ANGSTROMS) OF 29-2211</scope>
    <scope>GLYCOSYLATION AT ASN-225 AND ASN-239</scope>
    <scope>DISULFIDE BONDS</scope>
    <scope>METAL-BINDING SITES</scope>
</reference>
<gene>
    <name type="primary">F5</name>
</gene>
<accession>Q28107</accession>
<accession>Q28108</accession>
<proteinExistence type="evidence at protein level"/>
<comment type="function">
    <text>Central regulator of hemostasis. It serves as a critical cofactor for the prothrombinase activity of factor Xa that results in the activation of prothrombin to thrombin.</text>
</comment>
<comment type="activity regulation">
    <text evidence="1">Inhibited by SERPINA5.</text>
</comment>
<comment type="subunit">
    <text evidence="1">Factor Va, the activated form of factor V, is composed of a heavy chain and a light chain, non-covalently bound. The interaction between the two chains is calcium-dependent. Forms heterodimer with SERPINA5 (By similarity).</text>
</comment>
<comment type="subcellular location">
    <subcellularLocation>
        <location>Secreted</location>
    </subcellularLocation>
</comment>
<comment type="domain">
    <text>Domain B contains 29.5 X 9 AA tandem repeats, and 2 X 14 AA repeats.</text>
</comment>
<comment type="PTM">
    <text>Thrombin activates factor V proteolytically to the active cofactor, factor Va (formation of a heavy chain at the N-terminus and a light chain at the C-terminus).</text>
</comment>
<comment type="PTM">
    <text evidence="1">Sulfation is required for efficient thrombin cleavage and activation and for full procoagulant activity.</text>
</comment>
<comment type="PTM">
    <text evidence="1">Activated protein C inactivates factor V and factor Va by proteolytic degradation.</text>
</comment>
<comment type="similarity">
    <text evidence="7">Belongs to the multicopper oxidase family.</text>
</comment>
<evidence type="ECO:0000250" key="1"/>
<evidence type="ECO:0000250" key="2">
    <source>
        <dbReference type="UniProtKB" id="P12259"/>
    </source>
</evidence>
<evidence type="ECO:0000255" key="3"/>
<evidence type="ECO:0000255" key="4">
    <source>
        <dbReference type="PROSITE-ProRule" id="PRU00081"/>
    </source>
</evidence>
<evidence type="ECO:0000256" key="5">
    <source>
        <dbReference type="SAM" id="MobiDB-lite"/>
    </source>
</evidence>
<evidence type="ECO:0000269" key="6">
    <source>
    </source>
</evidence>
<evidence type="ECO:0000305" key="7"/>
<evidence type="ECO:0007829" key="8">
    <source>
        <dbReference type="PDB" id="1SDD"/>
    </source>
</evidence>